<dbReference type="EC" id="2.3.1.181" evidence="1"/>
<dbReference type="EMBL" id="CP000127">
    <property type="protein sequence ID" value="ABA59083.1"/>
    <property type="molecule type" value="Genomic_DNA"/>
</dbReference>
<dbReference type="RefSeq" id="WP_011331020.1">
    <property type="nucleotide sequence ID" value="NC_007484.1"/>
</dbReference>
<dbReference type="SMR" id="Q3J7W3"/>
<dbReference type="FunCoup" id="Q3J7W3">
    <property type="interactions" value="356"/>
</dbReference>
<dbReference type="STRING" id="323261.Noc_2630"/>
<dbReference type="KEGG" id="noc:Noc_2630"/>
<dbReference type="eggNOG" id="COG0321">
    <property type="taxonomic scope" value="Bacteria"/>
</dbReference>
<dbReference type="HOGENOM" id="CLU_035168_3_1_6"/>
<dbReference type="InParanoid" id="Q3J7W3"/>
<dbReference type="UniPathway" id="UPA00538">
    <property type="reaction ID" value="UER00592"/>
</dbReference>
<dbReference type="Proteomes" id="UP000006838">
    <property type="component" value="Chromosome"/>
</dbReference>
<dbReference type="GO" id="GO:0005737">
    <property type="term" value="C:cytoplasm"/>
    <property type="evidence" value="ECO:0007669"/>
    <property type="project" value="UniProtKB-SubCell"/>
</dbReference>
<dbReference type="GO" id="GO:0033819">
    <property type="term" value="F:lipoyl(octanoyl) transferase activity"/>
    <property type="evidence" value="ECO:0007669"/>
    <property type="project" value="UniProtKB-EC"/>
</dbReference>
<dbReference type="GO" id="GO:0036211">
    <property type="term" value="P:protein modification process"/>
    <property type="evidence" value="ECO:0007669"/>
    <property type="project" value="InterPro"/>
</dbReference>
<dbReference type="CDD" id="cd16444">
    <property type="entry name" value="LipB"/>
    <property type="match status" value="1"/>
</dbReference>
<dbReference type="FunFam" id="3.30.930.10:FF:000020">
    <property type="entry name" value="Octanoyltransferase"/>
    <property type="match status" value="1"/>
</dbReference>
<dbReference type="Gene3D" id="3.30.930.10">
    <property type="entry name" value="Bira Bifunctional Protein, Domain 2"/>
    <property type="match status" value="1"/>
</dbReference>
<dbReference type="HAMAP" id="MF_00013">
    <property type="entry name" value="LipB"/>
    <property type="match status" value="1"/>
</dbReference>
<dbReference type="InterPro" id="IPR045864">
    <property type="entry name" value="aa-tRNA-synth_II/BPL/LPL"/>
</dbReference>
<dbReference type="InterPro" id="IPR004143">
    <property type="entry name" value="BPL_LPL_catalytic"/>
</dbReference>
<dbReference type="InterPro" id="IPR000544">
    <property type="entry name" value="Octanoyltransferase"/>
</dbReference>
<dbReference type="InterPro" id="IPR020605">
    <property type="entry name" value="Octanoyltransferase_CS"/>
</dbReference>
<dbReference type="NCBIfam" id="TIGR00214">
    <property type="entry name" value="lipB"/>
    <property type="match status" value="1"/>
</dbReference>
<dbReference type="NCBIfam" id="NF010922">
    <property type="entry name" value="PRK14342.1"/>
    <property type="match status" value="1"/>
</dbReference>
<dbReference type="PANTHER" id="PTHR10993:SF7">
    <property type="entry name" value="LIPOYLTRANSFERASE 2, MITOCHONDRIAL-RELATED"/>
    <property type="match status" value="1"/>
</dbReference>
<dbReference type="PANTHER" id="PTHR10993">
    <property type="entry name" value="OCTANOYLTRANSFERASE"/>
    <property type="match status" value="1"/>
</dbReference>
<dbReference type="Pfam" id="PF21948">
    <property type="entry name" value="LplA-B_cat"/>
    <property type="match status" value="1"/>
</dbReference>
<dbReference type="PIRSF" id="PIRSF016262">
    <property type="entry name" value="LPLase"/>
    <property type="match status" value="1"/>
</dbReference>
<dbReference type="SUPFAM" id="SSF55681">
    <property type="entry name" value="Class II aaRS and biotin synthetases"/>
    <property type="match status" value="1"/>
</dbReference>
<dbReference type="PROSITE" id="PS51733">
    <property type="entry name" value="BPL_LPL_CATALYTIC"/>
    <property type="match status" value="1"/>
</dbReference>
<dbReference type="PROSITE" id="PS01313">
    <property type="entry name" value="LIPB"/>
    <property type="match status" value="1"/>
</dbReference>
<proteinExistence type="inferred from homology"/>
<organism>
    <name type="scientific">Nitrosococcus oceani (strain ATCC 19707 / BCRC 17464 / JCM 30415 / NCIMB 11848 / C-107)</name>
    <dbReference type="NCBI Taxonomy" id="323261"/>
    <lineage>
        <taxon>Bacteria</taxon>
        <taxon>Pseudomonadati</taxon>
        <taxon>Pseudomonadota</taxon>
        <taxon>Gammaproteobacteria</taxon>
        <taxon>Chromatiales</taxon>
        <taxon>Chromatiaceae</taxon>
        <taxon>Nitrosococcus</taxon>
    </lineage>
</organism>
<name>LIPB_NITOC</name>
<sequence length="224" mass="25483">MDKRIPVGADTLRIRNLGLQDYDTVWQAMRDFTVRRDSATVDELWWVEHPPVFTLGLNGQECHLRDVGDIPVVRCDRGGQVTYHGPGQSIVYILVDLRRRALGVRQLVDALELSVVDLLQSYEIETERRANAPGVYVQGRKIASLGLRVRKGCCYHGLSLNVAMDLSPFYRIDPCGYSGMEVIDLKRLGMELPLADVQQNLSRYLVRRLGYSAPFYGEENRMIK</sequence>
<evidence type="ECO:0000255" key="1">
    <source>
        <dbReference type="HAMAP-Rule" id="MF_00013"/>
    </source>
</evidence>
<evidence type="ECO:0000255" key="2">
    <source>
        <dbReference type="PROSITE-ProRule" id="PRU01067"/>
    </source>
</evidence>
<comment type="function">
    <text evidence="1">Catalyzes the transfer of endogenously produced octanoic acid from octanoyl-acyl-carrier-protein onto the lipoyl domains of lipoate-dependent enzymes. Lipoyl-ACP can also act as a substrate although octanoyl-ACP is likely to be the physiological substrate.</text>
</comment>
<comment type="catalytic activity">
    <reaction evidence="1">
        <text>octanoyl-[ACP] + L-lysyl-[protein] = N(6)-octanoyl-L-lysyl-[protein] + holo-[ACP] + H(+)</text>
        <dbReference type="Rhea" id="RHEA:17665"/>
        <dbReference type="Rhea" id="RHEA-COMP:9636"/>
        <dbReference type="Rhea" id="RHEA-COMP:9685"/>
        <dbReference type="Rhea" id="RHEA-COMP:9752"/>
        <dbReference type="Rhea" id="RHEA-COMP:9928"/>
        <dbReference type="ChEBI" id="CHEBI:15378"/>
        <dbReference type="ChEBI" id="CHEBI:29969"/>
        <dbReference type="ChEBI" id="CHEBI:64479"/>
        <dbReference type="ChEBI" id="CHEBI:78463"/>
        <dbReference type="ChEBI" id="CHEBI:78809"/>
        <dbReference type="EC" id="2.3.1.181"/>
    </reaction>
</comment>
<comment type="pathway">
    <text evidence="1">Protein modification; protein lipoylation via endogenous pathway; protein N(6)-(lipoyl)lysine from octanoyl-[acyl-carrier-protein]: step 1/2.</text>
</comment>
<comment type="subcellular location">
    <subcellularLocation>
        <location evidence="1">Cytoplasm</location>
    </subcellularLocation>
</comment>
<comment type="miscellaneous">
    <text evidence="1">In the reaction, the free carboxyl group of octanoic acid is attached via an amide linkage to the epsilon-amino group of a specific lysine residue of lipoyl domains of lipoate-dependent enzymes.</text>
</comment>
<comment type="similarity">
    <text evidence="1">Belongs to the LipB family.</text>
</comment>
<keyword id="KW-0012">Acyltransferase</keyword>
<keyword id="KW-0963">Cytoplasm</keyword>
<keyword id="KW-1185">Reference proteome</keyword>
<keyword id="KW-0808">Transferase</keyword>
<gene>
    <name evidence="1" type="primary">lipB</name>
    <name type="ordered locus">Noc_2630</name>
</gene>
<protein>
    <recommendedName>
        <fullName evidence="1">Octanoyltransferase</fullName>
        <ecNumber evidence="1">2.3.1.181</ecNumber>
    </recommendedName>
    <alternativeName>
        <fullName evidence="1">Lipoate-protein ligase B</fullName>
    </alternativeName>
    <alternativeName>
        <fullName evidence="1">Lipoyl/octanoyl transferase</fullName>
    </alternativeName>
    <alternativeName>
        <fullName evidence="1">Octanoyl-[acyl-carrier-protein]-protein N-octanoyltransferase</fullName>
    </alternativeName>
</protein>
<accession>Q3J7W3</accession>
<reference key="1">
    <citation type="journal article" date="2006" name="Appl. Environ. Microbiol.">
        <title>Complete genome sequence of the marine, chemolithoautotrophic, ammonia-oxidizing bacterium Nitrosococcus oceani ATCC 19707.</title>
        <authorList>
            <person name="Klotz M.G."/>
            <person name="Arp D.J."/>
            <person name="Chain P.S.G."/>
            <person name="El-Sheikh A.F."/>
            <person name="Hauser L.J."/>
            <person name="Hommes N.G."/>
            <person name="Larimer F.W."/>
            <person name="Malfatti S.A."/>
            <person name="Norton J.M."/>
            <person name="Poret-Peterson A.T."/>
            <person name="Vergez L.M."/>
            <person name="Ward B.B."/>
        </authorList>
    </citation>
    <scope>NUCLEOTIDE SEQUENCE [LARGE SCALE GENOMIC DNA]</scope>
    <source>
        <strain>ATCC 19707 / BCRC 17464 / JCM 30415 / NCIMB 11848 / C-107</strain>
    </source>
</reference>
<feature type="chain" id="PRO_0000242737" description="Octanoyltransferase">
    <location>
        <begin position="1"/>
        <end position="224"/>
    </location>
</feature>
<feature type="domain" description="BPL/LPL catalytic" evidence="2">
    <location>
        <begin position="38"/>
        <end position="213"/>
    </location>
</feature>
<feature type="active site" description="Acyl-thioester intermediate" evidence="1">
    <location>
        <position position="175"/>
    </location>
</feature>
<feature type="binding site" evidence="1">
    <location>
        <begin position="77"/>
        <end position="84"/>
    </location>
    <ligand>
        <name>substrate</name>
    </ligand>
</feature>
<feature type="binding site" evidence="1">
    <location>
        <begin position="144"/>
        <end position="146"/>
    </location>
    <ligand>
        <name>substrate</name>
    </ligand>
</feature>
<feature type="binding site" evidence="1">
    <location>
        <begin position="157"/>
        <end position="159"/>
    </location>
    <ligand>
        <name>substrate</name>
    </ligand>
</feature>
<feature type="site" description="Lowers pKa of active site Cys" evidence="1">
    <location>
        <position position="141"/>
    </location>
</feature>